<name>RAB5A_ORYSJ</name>
<sequence length="203" mass="22146">MAANPGNKIRNAKLVLLGDVGTGKSSLVLRFVKGQFVEFQESTIGAAFFSQTLAVNDETVKFEIWDTAGQERYHSLAPMYYRGAAAAIVVYDITNAASFTRAKKWVQELQAQGNPNTIMALAGNKADMVEARQVPAEEAKTYAQENGLFFMETSAKTAINVNDVFHEIAKRLLQGQQAQDTPAGMVLNQRPAERMVSSSSCCS</sequence>
<keyword id="KW-1003">Cell membrane</keyword>
<keyword id="KW-0333">Golgi apparatus</keyword>
<keyword id="KW-0342">GTP-binding</keyword>
<keyword id="KW-0449">Lipoprotein</keyword>
<keyword id="KW-0472">Membrane</keyword>
<keyword id="KW-0547">Nucleotide-binding</keyword>
<keyword id="KW-0636">Prenylation</keyword>
<keyword id="KW-0653">Protein transport</keyword>
<keyword id="KW-1185">Reference proteome</keyword>
<keyword id="KW-0813">Transport</keyword>
<keyword id="KW-0926">Vacuole</keyword>
<protein>
    <recommendedName>
        <fullName evidence="11">Ras-related protein Rab5A</fullName>
        <shortName evidence="10">OsRab5A</shortName>
    </recommendedName>
    <alternativeName>
        <fullName evidence="9">Protein GLUTELIN PRECURSOR 4</fullName>
    </alternativeName>
    <alternativeName>
        <fullName evidence="8">Protein GLUTELIN PRECURSOR ACCUMULATION 1</fullName>
    </alternativeName>
</protein>
<organism>
    <name type="scientific">Oryza sativa subsp. japonica</name>
    <name type="common">Rice</name>
    <dbReference type="NCBI Taxonomy" id="39947"/>
    <lineage>
        <taxon>Eukaryota</taxon>
        <taxon>Viridiplantae</taxon>
        <taxon>Streptophyta</taxon>
        <taxon>Embryophyta</taxon>
        <taxon>Tracheophyta</taxon>
        <taxon>Spermatophyta</taxon>
        <taxon>Magnoliopsida</taxon>
        <taxon>Liliopsida</taxon>
        <taxon>Poales</taxon>
        <taxon>Poaceae</taxon>
        <taxon>BOP clade</taxon>
        <taxon>Oryzoideae</taxon>
        <taxon>Oryzeae</taxon>
        <taxon>Oryzinae</taxon>
        <taxon>Oryza</taxon>
        <taxon>Oryza sativa</taxon>
    </lineage>
</organism>
<accession>Q0ILQ6</accession>
<accession>Q2QLR7</accession>
<accession>Q94IR3</accession>
<accession>Q9FEV1</accession>
<feature type="chain" id="PRO_0000445091" description="Ras-related protein Rab5A">
    <location>
        <begin position="1"/>
        <end position="203"/>
    </location>
</feature>
<feature type="short sequence motif" description="Effector region" evidence="11">
    <location>
        <begin position="40"/>
        <end position="48"/>
    </location>
</feature>
<feature type="binding site" evidence="1">
    <location>
        <begin position="18"/>
        <end position="26"/>
    </location>
    <ligand>
        <name>GTP</name>
        <dbReference type="ChEBI" id="CHEBI:37565"/>
    </ligand>
</feature>
<feature type="binding site" evidence="1">
    <location>
        <begin position="66"/>
        <end position="70"/>
    </location>
    <ligand>
        <name>GTP</name>
        <dbReference type="ChEBI" id="CHEBI:37565"/>
    </ligand>
</feature>
<feature type="binding site" evidence="1">
    <location>
        <begin position="124"/>
        <end position="127"/>
    </location>
    <ligand>
        <name>GTP</name>
        <dbReference type="ChEBI" id="CHEBI:37565"/>
    </ligand>
</feature>
<feature type="binding site" evidence="1">
    <location>
        <begin position="154"/>
        <end position="155"/>
    </location>
    <ligand>
        <name>GTP</name>
        <dbReference type="ChEBI" id="CHEBI:37565"/>
    </ligand>
</feature>
<feature type="lipid moiety-binding region" description="S-geranylgeranyl cysteine" evidence="12">
    <location>
        <position position="201"/>
    </location>
</feature>
<feature type="lipid moiety-binding region" description="S-geranylgeranyl cysteine" evidence="12">
    <location>
        <position position="202"/>
    </location>
</feature>
<feature type="mutagenesis site" description="No effect on the interaction with VPS9A." evidence="4">
    <original>S</original>
    <variation>N</variation>
    <location>
        <position position="25"/>
    </location>
</feature>
<feature type="mutagenesis site" description="In EM960; Accumulation of proglutelins in seeds and abnormal organization of the endomembrane system in endosperm." evidence="3">
    <original>G</original>
    <variation>D</variation>
    <location>
        <position position="45"/>
    </location>
</feature>
<feature type="mutagenesis site" description="Abolishes the interaction with VPS9A." evidence="4">
    <original>Q</original>
    <variation>L</variation>
    <location>
        <position position="70"/>
    </location>
</feature>
<feature type="sequence conflict" description="In Ref. 1; AAK38149." evidence="11" ref="1">
    <original>S</original>
    <variation>G</variation>
    <location>
        <position position="75"/>
    </location>
</feature>
<gene>
    <name evidence="10" type="primary">RAB5A</name>
    <name evidence="9" type="synonym">GLUP4</name>
    <name evidence="8" type="synonym">GPA1</name>
    <name evidence="14" type="ordered locus">Os12g0631100</name>
    <name evidence="13" type="ordered locus">LOC_Os12g43550</name>
</gene>
<comment type="function">
    <text evidence="2 3 4 6">Plays an important role in intracellular trafficking of seed storage proteins to the protein storage vacuoles (PSVs) (PubMed:21105928). Participates in the transport of the proglutelins from the Golgi apparatus to the PSVs in endosperm (PubMed:21825104). Functions cooperatively with VPS9A to regulate post-Golgi dense vesicle-mediated transport of storage proteins to the type II protein bodies (PBII) protein storage vacuoles in developing endosperm (PubMed:23723154). Involved in the maintenance of the general structural organization of the endomembrane system in developing endosperm (PubMed:21105928, PubMed:21825104). Binds GTP in vitro (PubMed:21105928, PubMed:21825104, PubMed:23723154). Forms a quaternary complex with the two glutelin zipcode RNA-binding proteins RBP-L and RBP-P, and the membrane trafficking factor NSF (PubMed:32471860). This quaternay complex carries glutelin mRNAs for active transport on endosomes to the cortical endoplasmic reticulum membrane, and enables endosome-mediated glutelin mRNA transport in endosperm cells (PubMed:32471860).</text>
</comment>
<comment type="subunit">
    <text evidence="4 5 6">Interacts with VPS9A (PubMed:23723154, PubMed:24488962). Interacts with NSF and RBP-L (PubMed:32471860).</text>
</comment>
<comment type="subcellular location">
    <subcellularLocation>
        <location evidence="2 3">Prevacuolar compartment membrane</location>
        <topology evidence="11">Lipid-anchor</topology>
    </subcellularLocation>
    <subcellularLocation>
        <location evidence="2 3">Golgi apparatus membrane</location>
        <topology evidence="11">Lipid-anchor</topology>
    </subcellularLocation>
    <subcellularLocation>
        <location evidence="3">Cell membrane</location>
        <topology evidence="11">Lipid-anchor</topology>
    </subcellularLocation>
    <subcellularLocation>
        <location evidence="3">Protein storage vacuole membrane</location>
        <topology evidence="11">Lipid-anchor</topology>
    </subcellularLocation>
</comment>
<comment type="tissue specificity">
    <text evidence="7">Highly expressed in roots (Ref.1). Expressed at low levels in shoots, flowers and grains (Ref.1).</text>
</comment>
<comment type="developmental stage">
    <text evidence="2">Expression in developing seeds is low from 6 to 12 days after flowering (DAF), peaks at 12 DAF and is barely detected at 15 DAF.</text>
</comment>
<comment type="induction">
    <text evidence="7">Induced by nitrogen and phosphorus starvation in roots.</text>
</comment>
<comment type="disruption phenotype">
    <text evidence="2 3">Accumulation of proglutelins in seed endosperm (PubMed:21105928, PubMed:21825104). Mistargeting of dense vesicles (DVs) to the type II protein bodies (PBII) protein storage vacuoles and reduction of PBII size in endosperm. Formation of paramural bodies (PMBs) secretory vesicle-like structures charged with DVs in endosperm (PubMed:21105928, PubMed:21825104).</text>
</comment>
<comment type="similarity">
    <text evidence="11">Belongs to the small GTPase superfamily. Rab family.</text>
</comment>
<comment type="sequence caution" evidence="11">
    <conflict type="erroneous gene model prediction">
        <sequence resource="EMBL-CDS" id="ABA99930"/>
    </conflict>
</comment>
<dbReference type="EMBL" id="AY029301">
    <property type="protein sequence ID" value="AAK38149.1"/>
    <property type="molecule type" value="mRNA"/>
</dbReference>
<dbReference type="EMBL" id="AJ292320">
    <property type="protein sequence ID" value="CAC19792.1"/>
    <property type="molecule type" value="mRNA"/>
</dbReference>
<dbReference type="EMBL" id="DP000011">
    <property type="protein sequence ID" value="ABG22102.1"/>
    <property type="molecule type" value="Genomic_DNA"/>
</dbReference>
<dbReference type="EMBL" id="DP000011">
    <property type="protein sequence ID" value="ABA99930.2"/>
    <property type="status" value="ALT_SEQ"/>
    <property type="molecule type" value="Genomic_DNA"/>
</dbReference>
<dbReference type="EMBL" id="AP008218">
    <property type="protein sequence ID" value="BAF30359.1"/>
    <property type="molecule type" value="Genomic_DNA"/>
</dbReference>
<dbReference type="EMBL" id="AP014968">
    <property type="protein sequence ID" value="BAT18213.1"/>
    <property type="molecule type" value="Genomic_DNA"/>
</dbReference>
<dbReference type="EMBL" id="AK061116">
    <property type="protein sequence ID" value="BAG87736.1"/>
    <property type="molecule type" value="mRNA"/>
</dbReference>
<dbReference type="RefSeq" id="XP_015619916.1">
    <property type="nucleotide sequence ID" value="XM_015764430.1"/>
</dbReference>
<dbReference type="SMR" id="Q0ILQ6"/>
<dbReference type="FunCoup" id="Q0ILQ6">
    <property type="interactions" value="3066"/>
</dbReference>
<dbReference type="STRING" id="39947.Q0ILQ6"/>
<dbReference type="PaxDb" id="39947-Q0ILQ6"/>
<dbReference type="EnsemblPlants" id="Os12t0631100-01">
    <property type="protein sequence ID" value="Os12t0631100-01"/>
    <property type="gene ID" value="Os12g0631100"/>
</dbReference>
<dbReference type="EnsemblPlants" id="Os12t0631100-02">
    <property type="protein sequence ID" value="Os12t0631100-02"/>
    <property type="gene ID" value="Os12g0631100"/>
</dbReference>
<dbReference type="Gramene" id="Os12t0631100-01">
    <property type="protein sequence ID" value="Os12t0631100-01"/>
    <property type="gene ID" value="Os12g0631100"/>
</dbReference>
<dbReference type="Gramene" id="Os12t0631100-02">
    <property type="protein sequence ID" value="Os12t0631100-02"/>
    <property type="gene ID" value="Os12g0631100"/>
</dbReference>
<dbReference type="KEGG" id="dosa:Os12g0631100"/>
<dbReference type="eggNOG" id="KOG0092">
    <property type="taxonomic scope" value="Eukaryota"/>
</dbReference>
<dbReference type="HOGENOM" id="CLU_041217_10_2_1"/>
<dbReference type="InParanoid" id="Q0ILQ6"/>
<dbReference type="OMA" id="PKNEPQC"/>
<dbReference type="OrthoDB" id="63533at2759"/>
<dbReference type="PlantReactome" id="R-OSA-9626305">
    <property type="pathway name" value="Regulatory network of nutrient accumulation"/>
</dbReference>
<dbReference type="Proteomes" id="UP000000763">
    <property type="component" value="Chromosome 12"/>
</dbReference>
<dbReference type="Proteomes" id="UP000059680">
    <property type="component" value="Chromosome 12"/>
</dbReference>
<dbReference type="GO" id="GO:0030139">
    <property type="term" value="C:endocytic vesicle"/>
    <property type="evidence" value="ECO:0000318"/>
    <property type="project" value="GO_Central"/>
</dbReference>
<dbReference type="GO" id="GO:0012505">
    <property type="term" value="C:endomembrane system"/>
    <property type="evidence" value="ECO:0000318"/>
    <property type="project" value="GO_Central"/>
</dbReference>
<dbReference type="GO" id="GO:0005768">
    <property type="term" value="C:endosome"/>
    <property type="evidence" value="ECO:0000318"/>
    <property type="project" value="GO_Central"/>
</dbReference>
<dbReference type="GO" id="GO:0000139">
    <property type="term" value="C:Golgi membrane"/>
    <property type="evidence" value="ECO:0000314"/>
    <property type="project" value="UniProtKB"/>
</dbReference>
<dbReference type="GO" id="GO:0009705">
    <property type="term" value="C:plant-type vacuole membrane"/>
    <property type="evidence" value="ECO:0000314"/>
    <property type="project" value="UniProtKB"/>
</dbReference>
<dbReference type="GO" id="GO:0005886">
    <property type="term" value="C:plasma membrane"/>
    <property type="evidence" value="ECO:0000314"/>
    <property type="project" value="UniProtKB"/>
</dbReference>
<dbReference type="GO" id="GO:0032586">
    <property type="term" value="C:protein storage vacuole membrane"/>
    <property type="evidence" value="ECO:0000314"/>
    <property type="project" value="UniProtKB"/>
</dbReference>
<dbReference type="GO" id="GO:0005525">
    <property type="term" value="F:GTP binding"/>
    <property type="evidence" value="ECO:0000314"/>
    <property type="project" value="UniProtKB"/>
</dbReference>
<dbReference type="GO" id="GO:0003924">
    <property type="term" value="F:GTPase activity"/>
    <property type="evidence" value="ECO:0000318"/>
    <property type="project" value="GO_Central"/>
</dbReference>
<dbReference type="GO" id="GO:0010256">
    <property type="term" value="P:endomembrane system organization"/>
    <property type="evidence" value="ECO:0000315"/>
    <property type="project" value="UniProtKB"/>
</dbReference>
<dbReference type="GO" id="GO:0006886">
    <property type="term" value="P:intracellular protein transport"/>
    <property type="evidence" value="ECO:0000315"/>
    <property type="project" value="UniProtKB"/>
</dbReference>
<dbReference type="GO" id="GO:0051028">
    <property type="term" value="P:mRNA transport"/>
    <property type="evidence" value="ECO:0000314"/>
    <property type="project" value="UniProtKB"/>
</dbReference>
<dbReference type="CDD" id="cd01860">
    <property type="entry name" value="Rab5_related"/>
    <property type="match status" value="1"/>
</dbReference>
<dbReference type="FunFam" id="3.40.50.300:FF:000687">
    <property type="entry name" value="Ras-related protein RABF2b"/>
    <property type="match status" value="1"/>
</dbReference>
<dbReference type="Gene3D" id="3.40.50.300">
    <property type="entry name" value="P-loop containing nucleotide triphosphate hydrolases"/>
    <property type="match status" value="1"/>
</dbReference>
<dbReference type="InterPro" id="IPR027417">
    <property type="entry name" value="P-loop_NTPase"/>
</dbReference>
<dbReference type="InterPro" id="IPR005225">
    <property type="entry name" value="Small_GTP-bd"/>
</dbReference>
<dbReference type="InterPro" id="IPR001806">
    <property type="entry name" value="Small_GTPase"/>
</dbReference>
<dbReference type="NCBIfam" id="TIGR00231">
    <property type="entry name" value="small_GTP"/>
    <property type="match status" value="1"/>
</dbReference>
<dbReference type="PANTHER" id="PTHR47978">
    <property type="match status" value="1"/>
</dbReference>
<dbReference type="Pfam" id="PF00071">
    <property type="entry name" value="Ras"/>
    <property type="match status" value="1"/>
</dbReference>
<dbReference type="PRINTS" id="PR00449">
    <property type="entry name" value="RASTRNSFRMNG"/>
</dbReference>
<dbReference type="SMART" id="SM00175">
    <property type="entry name" value="RAB"/>
    <property type="match status" value="1"/>
</dbReference>
<dbReference type="SMART" id="SM00176">
    <property type="entry name" value="RAN"/>
    <property type="match status" value="1"/>
</dbReference>
<dbReference type="SMART" id="SM00173">
    <property type="entry name" value="RAS"/>
    <property type="match status" value="1"/>
</dbReference>
<dbReference type="SMART" id="SM00174">
    <property type="entry name" value="RHO"/>
    <property type="match status" value="1"/>
</dbReference>
<dbReference type="SUPFAM" id="SSF52540">
    <property type="entry name" value="P-loop containing nucleoside triphosphate hydrolases"/>
    <property type="match status" value="1"/>
</dbReference>
<dbReference type="PROSITE" id="PS51419">
    <property type="entry name" value="RAB"/>
    <property type="match status" value="1"/>
</dbReference>
<reference key="1">
    <citation type="journal article" date="2002" name="Plant Sci.">
        <title>Identification of a new small GTP-binding protein gene OsRab5a, genomic organization, and expression pattern analysis during nitrate supply and early nutrient starvation in rice (Oryza sativa L.) root.</title>
        <authorList>
            <person name="Wang X.B."/>
            <person name="Xia M."/>
            <person name="Chen Q."/>
            <person name="Wu Z."/>
            <person name="Wu P."/>
        </authorList>
    </citation>
    <scope>NUCLEOTIDE SEQUENCE [MRNA]</scope>
    <scope>TISSUE SPECIFICITY</scope>
    <scope>INDUCTION</scope>
</reference>
<reference key="2">
    <citation type="submission" date="2000-12" db="EMBL/GenBank/DDBJ databases">
        <title>Molecular cloning and characterization of Osrab5A, a small GTP-binding protein of Oryza sativa.</title>
        <authorList>
            <person name="Liu X.B."/>
            <person name="Lin H.X."/>
            <person name="Li F.Q."/>
            <person name="Liu L.S."/>
        </authorList>
    </citation>
    <scope>NUCLEOTIDE SEQUENCE [MRNA]</scope>
    <source>
        <tissue>Panicle</tissue>
    </source>
</reference>
<reference key="3">
    <citation type="journal article" date="2005" name="BMC Biol.">
        <title>The sequence of rice chromosomes 11 and 12, rich in disease resistance genes and recent gene duplications.</title>
        <authorList>
            <consortium name="The rice chromosomes 11 and 12 sequencing consortia"/>
        </authorList>
    </citation>
    <scope>NUCLEOTIDE SEQUENCE [LARGE SCALE GENOMIC DNA]</scope>
    <source>
        <strain>cv. Nipponbare</strain>
    </source>
</reference>
<reference key="4">
    <citation type="journal article" date="2005" name="Nature">
        <title>The map-based sequence of the rice genome.</title>
        <authorList>
            <consortium name="International rice genome sequencing project (IRGSP)"/>
        </authorList>
    </citation>
    <scope>NUCLEOTIDE SEQUENCE [LARGE SCALE GENOMIC DNA]</scope>
    <source>
        <strain>cv. Nipponbare</strain>
    </source>
</reference>
<reference key="5">
    <citation type="journal article" date="2008" name="Nucleic Acids Res.">
        <title>The rice annotation project database (RAP-DB): 2008 update.</title>
        <authorList>
            <consortium name="The rice annotation project (RAP)"/>
        </authorList>
    </citation>
    <scope>GENOME REANNOTATION</scope>
    <source>
        <strain>cv. Nipponbare</strain>
    </source>
</reference>
<reference key="6">
    <citation type="journal article" date="2013" name="Rice">
        <title>Improvement of the Oryza sativa Nipponbare reference genome using next generation sequence and optical map data.</title>
        <authorList>
            <person name="Kawahara Y."/>
            <person name="de la Bastide M."/>
            <person name="Hamilton J.P."/>
            <person name="Kanamori H."/>
            <person name="McCombie W.R."/>
            <person name="Ouyang S."/>
            <person name="Schwartz D.C."/>
            <person name="Tanaka T."/>
            <person name="Wu J."/>
            <person name="Zhou S."/>
            <person name="Childs K.L."/>
            <person name="Davidson R.M."/>
            <person name="Lin H."/>
            <person name="Quesada-Ocampo L."/>
            <person name="Vaillancourt B."/>
            <person name="Sakai H."/>
            <person name="Lee S.S."/>
            <person name="Kim J."/>
            <person name="Numa H."/>
            <person name="Itoh T."/>
            <person name="Buell C.R."/>
            <person name="Matsumoto T."/>
        </authorList>
    </citation>
    <scope>GENOME REANNOTATION</scope>
    <source>
        <strain>cv. Nipponbare</strain>
    </source>
</reference>
<reference key="7">
    <citation type="journal article" date="2003" name="Science">
        <title>Collection, mapping, and annotation of over 28,000 cDNA clones from japonica rice.</title>
        <authorList>
            <consortium name="The rice full-length cDNA consortium"/>
        </authorList>
    </citation>
    <scope>NUCLEOTIDE SEQUENCE [LARGE SCALE MRNA]</scope>
    <source>
        <strain>cv. Nipponbare</strain>
    </source>
</reference>
<reference key="8">
    <citation type="journal article" date="2010" name="Plant J.">
        <title>OsRab5a regulates endomembrane organization and storage protein trafficking in rice endosperm cells.</title>
        <authorList>
            <person name="Wang Y."/>
            <person name="Ren Y."/>
            <person name="Liu X."/>
            <person name="Jiang L."/>
            <person name="Chen L."/>
            <person name="Han X."/>
            <person name="Jin M."/>
            <person name="Liu S."/>
            <person name="Liu F."/>
            <person name="Lv J."/>
            <person name="Zhou K."/>
            <person name="Su N."/>
            <person name="Bao Y."/>
            <person name="Wan J."/>
        </authorList>
    </citation>
    <scope>FUNCTION</scope>
    <scope>SUBCELLULAR LOCATION</scope>
    <scope>TISSUE SPECIFICITY</scope>
    <scope>DEVELOPMENTAL STAGE</scope>
    <scope>DISRUPTION PHENOTYPE</scope>
</reference>
<reference key="9">
    <citation type="journal article" date="2011" name="Plant Physiol.">
        <title>The small GTPase Rab5a is essential for intracellular transport of proglutelin from the Golgi apparatus to the protein storage vacuole and endosomal membrane organization in developing rice endosperm.</title>
        <authorList>
            <person name="Fukuda M."/>
            <person name="Satoh-Cruz M."/>
            <person name="Wen L."/>
            <person name="Crofts A.J."/>
            <person name="Sugino A."/>
            <person name="Washida H."/>
            <person name="Okita T.W."/>
            <person name="Ogawa M."/>
            <person name="Kawagoe Y."/>
            <person name="Maeshima M."/>
            <person name="Kumamaru T."/>
        </authorList>
    </citation>
    <scope>FUNCTION</scope>
    <scope>SUBCELLULAR LOCATION</scope>
    <scope>DISRUPTION PHENOTYPE</scope>
    <scope>MUTAGENESIS OF GLY-45</scope>
    <scope>ISOPRENYLATION AT CYS-201 AND CYS-202</scope>
</reference>
<reference key="10">
    <citation type="journal article" date="2013" name="Mol. Plant">
        <title>OsVPS9A functions cooperatively with OsRAB5A to regulate post-Golgi dense vesicle-mediated storage protein trafficking to the protein storage vacuole in rice endosperm cells.</title>
        <authorList>
            <person name="Liu F."/>
            <person name="Ren Y."/>
            <person name="Wang Y."/>
            <person name="Peng C."/>
            <person name="Zhou K."/>
            <person name="Lv J."/>
            <person name="Guo X."/>
            <person name="Zhang X."/>
            <person name="Zhong M."/>
            <person name="Zhao S."/>
            <person name="Jiang L."/>
            <person name="Wang H."/>
            <person name="Bao Y."/>
            <person name="Wan J."/>
        </authorList>
    </citation>
    <scope>FUNCTION</scope>
    <scope>INTERACTION WITH VPS9A</scope>
    <scope>MUTAGENESIS OF SER-25 AND GLN-70</scope>
</reference>
<reference key="11">
    <citation type="journal article" date="2014" name="Plant Cell">
        <title>GLUTELIN PRECURSOR ACCUMULATION3 encodes a regulator of post-Golgi vesicular traffic essential for vacuolar protein sorting in rice endosperm.</title>
        <authorList>
            <person name="Ren Y."/>
            <person name="Wang Y."/>
            <person name="Liu F."/>
            <person name="Zhou K."/>
            <person name="Ding Y."/>
            <person name="Zhou F."/>
            <person name="Wang Y."/>
            <person name="Liu K."/>
            <person name="Gan L."/>
            <person name="Ma W."/>
            <person name="Han X."/>
            <person name="Zhang X."/>
            <person name="Guo X."/>
            <person name="Wu F."/>
            <person name="Cheng Z."/>
            <person name="Wang J."/>
            <person name="Lei C."/>
            <person name="Lin Q."/>
            <person name="Jiang L."/>
            <person name="Wu C."/>
            <person name="Bao Y."/>
            <person name="Wang H."/>
            <person name="Wan J."/>
        </authorList>
    </citation>
    <scope>INTERACTION WITH VPS9A</scope>
</reference>
<reference key="12">
    <citation type="journal article" date="2020" name="Plant Cell">
        <title>Zipcode RNA-binding proteins and membrane trafficking proteins cooperate to transport glutelin mRNAs in rice endosperm.</title>
        <authorList>
            <person name="Tian L."/>
            <person name="Doroshenk K.A."/>
            <person name="Zhang L."/>
            <person name="Fukuda M."/>
            <person name="Washida H."/>
            <person name="Kumamaru T."/>
            <person name="Okita T."/>
        </authorList>
    </citation>
    <scope>FUNCTION</scope>
    <scope>INTERACTION WITH NSF AND RBP-L</scope>
</reference>
<proteinExistence type="evidence at protein level"/>
<evidence type="ECO:0000250" key="1">
    <source>
        <dbReference type="UniProtKB" id="Q9SN68"/>
    </source>
</evidence>
<evidence type="ECO:0000269" key="2">
    <source>
    </source>
</evidence>
<evidence type="ECO:0000269" key="3">
    <source>
    </source>
</evidence>
<evidence type="ECO:0000269" key="4">
    <source>
    </source>
</evidence>
<evidence type="ECO:0000269" key="5">
    <source>
    </source>
</evidence>
<evidence type="ECO:0000269" key="6">
    <source>
    </source>
</evidence>
<evidence type="ECO:0000269" key="7">
    <source ref="1"/>
</evidence>
<evidence type="ECO:0000303" key="8">
    <source>
    </source>
</evidence>
<evidence type="ECO:0000303" key="9">
    <source>
    </source>
</evidence>
<evidence type="ECO:0000303" key="10">
    <source ref="1"/>
</evidence>
<evidence type="ECO:0000305" key="11"/>
<evidence type="ECO:0000305" key="12">
    <source>
    </source>
</evidence>
<evidence type="ECO:0000312" key="13">
    <source>
        <dbReference type="EMBL" id="ABG22102.1"/>
    </source>
</evidence>
<evidence type="ECO:0000312" key="14">
    <source>
        <dbReference type="EMBL" id="BAF30359.1"/>
    </source>
</evidence>